<protein>
    <recommendedName>
        <fullName evidence="1">Glycine--tRNA ligase alpha subunit</fullName>
        <ecNumber evidence="1">6.1.1.14</ecNumber>
    </recommendedName>
    <alternativeName>
        <fullName evidence="1">Glycyl-tRNA synthetase alpha subunit</fullName>
        <shortName evidence="1">GlyRS</shortName>
    </alternativeName>
</protein>
<comment type="catalytic activity">
    <reaction evidence="1">
        <text>tRNA(Gly) + glycine + ATP = glycyl-tRNA(Gly) + AMP + diphosphate</text>
        <dbReference type="Rhea" id="RHEA:16013"/>
        <dbReference type="Rhea" id="RHEA-COMP:9664"/>
        <dbReference type="Rhea" id="RHEA-COMP:9683"/>
        <dbReference type="ChEBI" id="CHEBI:30616"/>
        <dbReference type="ChEBI" id="CHEBI:33019"/>
        <dbReference type="ChEBI" id="CHEBI:57305"/>
        <dbReference type="ChEBI" id="CHEBI:78442"/>
        <dbReference type="ChEBI" id="CHEBI:78522"/>
        <dbReference type="ChEBI" id="CHEBI:456215"/>
        <dbReference type="EC" id="6.1.1.14"/>
    </reaction>
</comment>
<comment type="subunit">
    <text evidence="1">Tetramer of two alpha and two beta subunits.</text>
</comment>
<comment type="subcellular location">
    <subcellularLocation>
        <location evidence="1">Cytoplasm</location>
    </subcellularLocation>
</comment>
<comment type="similarity">
    <text evidence="1">Belongs to the class-II aminoacyl-tRNA synthetase family.</text>
</comment>
<proteinExistence type="inferred from homology"/>
<sequence length="290" mass="33415">MYFQDIISSLNNFWSEKGCLLLQPYDLEKGAGTMSPHSFLRAIGPEPWAVAYPEPCRRPTDGRYGDNPNRAQHYFQYQVLIKPSLDGIQEIYLSSLEALGISAKDHDIRFVEDNWESPTLGAWGVGWEVWLDGMEVTQFTYFQQCGGLDCKPVSIEITYGLERLAMYLQNVESIWDLSWNKKTKYGDIWLPFETGQCKYNFEESNSENLRKLFEIYEEEAHQLIAKKLPAPCLDYVLKCSHTFNLLEARGVISVTERTKIIARIRSLARKVAEAWLEERESLGFPLCAEN</sequence>
<feature type="chain" id="PRO_1000047465" description="Glycine--tRNA ligase alpha subunit">
    <location>
        <begin position="1"/>
        <end position="290"/>
    </location>
</feature>
<name>SYGA_PROMT</name>
<keyword id="KW-0030">Aminoacyl-tRNA synthetase</keyword>
<keyword id="KW-0067">ATP-binding</keyword>
<keyword id="KW-0963">Cytoplasm</keyword>
<keyword id="KW-0436">Ligase</keyword>
<keyword id="KW-0547">Nucleotide-binding</keyword>
<keyword id="KW-0648">Protein biosynthesis</keyword>
<keyword id="KW-1185">Reference proteome</keyword>
<gene>
    <name evidence="1" type="primary">glyQ</name>
    <name type="ordered locus">PMN2A_0778</name>
</gene>
<evidence type="ECO:0000255" key="1">
    <source>
        <dbReference type="HAMAP-Rule" id="MF_00254"/>
    </source>
</evidence>
<organism>
    <name type="scientific">Prochlorococcus marinus (strain NATL2A)</name>
    <dbReference type="NCBI Taxonomy" id="59920"/>
    <lineage>
        <taxon>Bacteria</taxon>
        <taxon>Bacillati</taxon>
        <taxon>Cyanobacteriota</taxon>
        <taxon>Cyanophyceae</taxon>
        <taxon>Synechococcales</taxon>
        <taxon>Prochlorococcaceae</taxon>
        <taxon>Prochlorococcus</taxon>
    </lineage>
</organism>
<accession>Q46JQ9</accession>
<dbReference type="EC" id="6.1.1.14" evidence="1"/>
<dbReference type="EMBL" id="CP000095">
    <property type="protein sequence ID" value="AAZ58269.1"/>
    <property type="molecule type" value="Genomic_DNA"/>
</dbReference>
<dbReference type="RefSeq" id="WP_011294866.1">
    <property type="nucleotide sequence ID" value="NC_007335.2"/>
</dbReference>
<dbReference type="SMR" id="Q46JQ9"/>
<dbReference type="STRING" id="59920.PMN2A_0778"/>
<dbReference type="KEGG" id="pmn:PMN2A_0778"/>
<dbReference type="HOGENOM" id="CLU_057066_1_0_3"/>
<dbReference type="OrthoDB" id="9802183at2"/>
<dbReference type="PhylomeDB" id="Q46JQ9"/>
<dbReference type="Proteomes" id="UP000002535">
    <property type="component" value="Chromosome"/>
</dbReference>
<dbReference type="GO" id="GO:0005829">
    <property type="term" value="C:cytosol"/>
    <property type="evidence" value="ECO:0007669"/>
    <property type="project" value="TreeGrafter"/>
</dbReference>
<dbReference type="GO" id="GO:0005524">
    <property type="term" value="F:ATP binding"/>
    <property type="evidence" value="ECO:0007669"/>
    <property type="project" value="UniProtKB-UniRule"/>
</dbReference>
<dbReference type="GO" id="GO:0004820">
    <property type="term" value="F:glycine-tRNA ligase activity"/>
    <property type="evidence" value="ECO:0007669"/>
    <property type="project" value="UniProtKB-UniRule"/>
</dbReference>
<dbReference type="GO" id="GO:0006426">
    <property type="term" value="P:glycyl-tRNA aminoacylation"/>
    <property type="evidence" value="ECO:0007669"/>
    <property type="project" value="UniProtKB-UniRule"/>
</dbReference>
<dbReference type="CDD" id="cd00733">
    <property type="entry name" value="GlyRS_alpha_core"/>
    <property type="match status" value="1"/>
</dbReference>
<dbReference type="FunFam" id="3.30.930.10:FF:000006">
    <property type="entry name" value="Glycine--tRNA ligase alpha subunit"/>
    <property type="match status" value="1"/>
</dbReference>
<dbReference type="Gene3D" id="3.30.930.10">
    <property type="entry name" value="Bira Bifunctional Protein, Domain 2"/>
    <property type="match status" value="1"/>
</dbReference>
<dbReference type="Gene3D" id="1.20.58.180">
    <property type="entry name" value="Class II aaRS and biotin synthetases, domain 2"/>
    <property type="match status" value="1"/>
</dbReference>
<dbReference type="HAMAP" id="MF_00254">
    <property type="entry name" value="Gly_tRNA_synth_alpha"/>
    <property type="match status" value="1"/>
</dbReference>
<dbReference type="InterPro" id="IPR045864">
    <property type="entry name" value="aa-tRNA-synth_II/BPL/LPL"/>
</dbReference>
<dbReference type="InterPro" id="IPR006194">
    <property type="entry name" value="Gly-tRNA-synth_heterodimer"/>
</dbReference>
<dbReference type="InterPro" id="IPR002310">
    <property type="entry name" value="Gly-tRNA_ligase_asu"/>
</dbReference>
<dbReference type="NCBIfam" id="TIGR00388">
    <property type="entry name" value="glyQ"/>
    <property type="match status" value="1"/>
</dbReference>
<dbReference type="NCBIfam" id="NF006827">
    <property type="entry name" value="PRK09348.1"/>
    <property type="match status" value="1"/>
</dbReference>
<dbReference type="PANTHER" id="PTHR30075:SF2">
    <property type="entry name" value="GLYCINE--TRNA LIGASE, CHLOROPLASTIC_MITOCHONDRIAL 2"/>
    <property type="match status" value="1"/>
</dbReference>
<dbReference type="PANTHER" id="PTHR30075">
    <property type="entry name" value="GLYCYL-TRNA SYNTHETASE"/>
    <property type="match status" value="1"/>
</dbReference>
<dbReference type="Pfam" id="PF02091">
    <property type="entry name" value="tRNA-synt_2e"/>
    <property type="match status" value="1"/>
</dbReference>
<dbReference type="PRINTS" id="PR01044">
    <property type="entry name" value="TRNASYNTHGA"/>
</dbReference>
<dbReference type="SUPFAM" id="SSF55681">
    <property type="entry name" value="Class II aaRS and biotin synthetases"/>
    <property type="match status" value="1"/>
</dbReference>
<dbReference type="PROSITE" id="PS50861">
    <property type="entry name" value="AA_TRNA_LIGASE_II_GLYAB"/>
    <property type="match status" value="1"/>
</dbReference>
<reference key="1">
    <citation type="journal article" date="2007" name="PLoS Genet.">
        <title>Patterns and implications of gene gain and loss in the evolution of Prochlorococcus.</title>
        <authorList>
            <person name="Kettler G.C."/>
            <person name="Martiny A.C."/>
            <person name="Huang K."/>
            <person name="Zucker J."/>
            <person name="Coleman M.L."/>
            <person name="Rodrigue S."/>
            <person name="Chen F."/>
            <person name="Lapidus A."/>
            <person name="Ferriera S."/>
            <person name="Johnson J."/>
            <person name="Steglich C."/>
            <person name="Church G.M."/>
            <person name="Richardson P."/>
            <person name="Chisholm S.W."/>
        </authorList>
    </citation>
    <scope>NUCLEOTIDE SEQUENCE [LARGE SCALE GENOMIC DNA]</scope>
    <source>
        <strain>NATL2A</strain>
    </source>
</reference>